<evidence type="ECO:0000250" key="1">
    <source>
        <dbReference type="UniProtKB" id="O00221"/>
    </source>
</evidence>
<evidence type="ECO:0000256" key="2">
    <source>
        <dbReference type="SAM" id="MobiDB-lite"/>
    </source>
</evidence>
<evidence type="ECO:0000269" key="3">
    <source>
    </source>
</evidence>
<evidence type="ECO:0000305" key="4"/>
<accession>O54910</accession>
<accession>Q3U686</accession>
<accession>Q9CZZ9</accession>
<accession>Q9D7U3</accession>
<name>IKBE_MOUSE</name>
<comment type="function">
    <text evidence="1 3">Sequesters NF-kappa-B transcription factor complexes in the cytoplasm, thereby inhibiting their activity (PubMed:32170099). Sequestered complexes include NFKB1/p50-RELA/p65 and NFKB1/p50-REL/c-Rel complexes (By similarity). Limits B-cell activation in response to pathogens, and also plays an important role in B-cell development (PubMed:32170099).</text>
</comment>
<comment type="subunit">
    <text evidence="1">Interacts with RELA, REL, NFKB1 nuclear factor NF-kappa-B p50 subunit and NFKB2 nuclear factor NF-kappa-B p52 subunit. Interacts with HNRNPA2B1; the interaction may be mediated by the RRM2 domain of HNRNPA2B1, and HNRNPA2B1 may interact simultaneously with FAM76B and either NFKBIA or NFKBIE to form a complex.</text>
</comment>
<comment type="interaction">
    <interactant intactId="EBI-6688774">
        <id>O54910</id>
    </interactant>
    <interactant intactId="EBI-773199">
        <id>O08749</id>
        <label>Dld</label>
    </interactant>
    <organismsDiffer>false</organismsDiffer>
    <experiments>4</experiments>
</comment>
<comment type="interaction">
    <interactant intactId="EBI-6688774">
        <id>O54910</id>
    </interactant>
    <interactant intactId="EBI-1209145">
        <id>Q04863</id>
        <label>Relb</label>
    </interactant>
    <organismsDiffer>false</organismsDiffer>
    <experiments>2</experiments>
</comment>
<comment type="subcellular location">
    <subcellularLocation>
        <location>Cytoplasm</location>
    </subcellularLocation>
</comment>
<comment type="PTM">
    <text>Serine phosphorylated; followed by proteasome-dependent degradation.</text>
</comment>
<comment type="disruption phenotype">
    <text evidence="3">Leads to marginal zone B (MZB) and B1 cell expansion, and a higher sensitivity to T-cell-dependent and -independent stimulation (PubMed:32170099). Aged mutant mice are predisposed to an oligoclonal indolent B-cell lymphoproliferative disorder, resembling monoclonal B-cell lymphocytosis (MBL) (PubMed:32170099).</text>
</comment>
<comment type="similarity">
    <text evidence="4">Belongs to the NF-kappa-B inhibitor family.</text>
</comment>
<gene>
    <name type="primary">Nfkbie</name>
    <name type="synonym">Ikbe</name>
</gene>
<protein>
    <recommendedName>
        <fullName>NF-kappa-B inhibitor epsilon</fullName>
        <shortName>NF-kappa-BIE</shortName>
    </recommendedName>
    <alternativeName>
        <fullName>I-kappa-B-epsilon</fullName>
        <shortName>IkB-E</shortName>
        <shortName>IkB-epsilon</shortName>
        <shortName>IkappaBepsilon</shortName>
    </alternativeName>
</protein>
<keyword id="KW-0040">ANK repeat</keyword>
<keyword id="KW-0963">Cytoplasm</keyword>
<keyword id="KW-0597">Phosphoprotein</keyword>
<keyword id="KW-1185">Reference proteome</keyword>
<keyword id="KW-0677">Repeat</keyword>
<dbReference type="EMBL" id="AF030896">
    <property type="protein sequence ID" value="AAB97517.1"/>
    <property type="molecule type" value="mRNA"/>
</dbReference>
<dbReference type="EMBL" id="AK008843">
    <property type="protein sequence ID" value="BAB25924.1"/>
    <property type="molecule type" value="mRNA"/>
</dbReference>
<dbReference type="EMBL" id="AK011965">
    <property type="protein sequence ID" value="BAB27943.1"/>
    <property type="molecule type" value="mRNA"/>
</dbReference>
<dbReference type="EMBL" id="AK151450">
    <property type="protein sequence ID" value="BAE30410.1"/>
    <property type="molecule type" value="mRNA"/>
</dbReference>
<dbReference type="EMBL" id="AK153248">
    <property type="protein sequence ID" value="BAE31839.1"/>
    <property type="molecule type" value="mRNA"/>
</dbReference>
<dbReference type="EMBL" id="BC030923">
    <property type="protein sequence ID" value="AAH30923.1"/>
    <property type="molecule type" value="mRNA"/>
</dbReference>
<dbReference type="CCDS" id="CCDS28811.1"/>
<dbReference type="RefSeq" id="NP_001291885.1">
    <property type="nucleotide sequence ID" value="NM_001304956.1"/>
</dbReference>
<dbReference type="RefSeq" id="NP_032716.2">
    <property type="nucleotide sequence ID" value="NM_008690.4"/>
</dbReference>
<dbReference type="SMR" id="O54910"/>
<dbReference type="FunCoup" id="O54910">
    <property type="interactions" value="1130"/>
</dbReference>
<dbReference type="IntAct" id="O54910">
    <property type="interactions" value="9"/>
</dbReference>
<dbReference type="STRING" id="10090.ENSMUSP00000024742"/>
<dbReference type="GlyGen" id="O54910">
    <property type="glycosylation" value="1 site, 1 O-linked glycan (1 site)"/>
</dbReference>
<dbReference type="iPTMnet" id="O54910"/>
<dbReference type="PhosphoSitePlus" id="O54910"/>
<dbReference type="PaxDb" id="10090-ENSMUSP00000024742"/>
<dbReference type="PeptideAtlas" id="O54910"/>
<dbReference type="ProteomicsDB" id="267307"/>
<dbReference type="Antibodypedia" id="800">
    <property type="antibodies" value="494 antibodies from 37 providers"/>
</dbReference>
<dbReference type="DNASU" id="18037"/>
<dbReference type="Ensembl" id="ENSMUST00000024742.9">
    <property type="protein sequence ID" value="ENSMUSP00000024742.8"/>
    <property type="gene ID" value="ENSMUSG00000023947.9"/>
</dbReference>
<dbReference type="GeneID" id="18037"/>
<dbReference type="KEGG" id="mmu:18037"/>
<dbReference type="UCSC" id="uc008cqv.2">
    <property type="organism name" value="mouse"/>
</dbReference>
<dbReference type="AGR" id="MGI:1194908"/>
<dbReference type="CTD" id="4794"/>
<dbReference type="MGI" id="MGI:1194908">
    <property type="gene designation" value="Nfkbie"/>
</dbReference>
<dbReference type="VEuPathDB" id="HostDB:ENSMUSG00000023947"/>
<dbReference type="eggNOG" id="KOG0504">
    <property type="taxonomic scope" value="Eukaryota"/>
</dbReference>
<dbReference type="GeneTree" id="ENSGT00940000159120"/>
<dbReference type="HOGENOM" id="CLU_000134_6_2_1"/>
<dbReference type="InParanoid" id="O54910"/>
<dbReference type="OMA" id="PMFNGCT"/>
<dbReference type="OrthoDB" id="10254947at2759"/>
<dbReference type="PhylomeDB" id="O54910"/>
<dbReference type="TreeFam" id="TF320166"/>
<dbReference type="BioGRID-ORCS" id="18037">
    <property type="hits" value="5 hits in 64 CRISPR screens"/>
</dbReference>
<dbReference type="ChiTaRS" id="Nfkbie">
    <property type="organism name" value="mouse"/>
</dbReference>
<dbReference type="PRO" id="PR:O54910"/>
<dbReference type="Proteomes" id="UP000000589">
    <property type="component" value="Chromosome 17"/>
</dbReference>
<dbReference type="RNAct" id="O54910">
    <property type="molecule type" value="protein"/>
</dbReference>
<dbReference type="Bgee" id="ENSMUSG00000023947">
    <property type="expression patterns" value="Expressed in peripheral lymph node and 158 other cell types or tissues"/>
</dbReference>
<dbReference type="ExpressionAtlas" id="O54910">
    <property type="expression patterns" value="baseline and differential"/>
</dbReference>
<dbReference type="GO" id="GO:0005829">
    <property type="term" value="C:cytosol"/>
    <property type="evidence" value="ECO:0007669"/>
    <property type="project" value="Ensembl"/>
</dbReference>
<dbReference type="GO" id="GO:0001650">
    <property type="term" value="C:fibrillar center"/>
    <property type="evidence" value="ECO:0007669"/>
    <property type="project" value="Ensembl"/>
</dbReference>
<dbReference type="GO" id="GO:0005654">
    <property type="term" value="C:nucleoplasm"/>
    <property type="evidence" value="ECO:0007669"/>
    <property type="project" value="Ensembl"/>
</dbReference>
<dbReference type="GO" id="GO:0048471">
    <property type="term" value="C:perinuclear region of cytoplasm"/>
    <property type="evidence" value="ECO:0007669"/>
    <property type="project" value="Ensembl"/>
</dbReference>
<dbReference type="GO" id="GO:0042942">
    <property type="term" value="P:D-serine transmembrane transport"/>
    <property type="evidence" value="ECO:0007669"/>
    <property type="project" value="Ensembl"/>
</dbReference>
<dbReference type="FunFam" id="1.25.40.20:FF:000237">
    <property type="entry name" value="NF-kappa-B inhibitor epsilon"/>
    <property type="match status" value="1"/>
</dbReference>
<dbReference type="Gene3D" id="1.25.40.20">
    <property type="entry name" value="Ankyrin repeat-containing domain"/>
    <property type="match status" value="1"/>
</dbReference>
<dbReference type="InterPro" id="IPR002110">
    <property type="entry name" value="Ankyrin_rpt"/>
</dbReference>
<dbReference type="InterPro" id="IPR036770">
    <property type="entry name" value="Ankyrin_rpt-contain_sf"/>
</dbReference>
<dbReference type="InterPro" id="IPR051070">
    <property type="entry name" value="NF-kappa-B_inhibitor"/>
</dbReference>
<dbReference type="PANTHER" id="PTHR46680">
    <property type="entry name" value="NF-KAPPA-B INHIBITOR ALPHA"/>
    <property type="match status" value="1"/>
</dbReference>
<dbReference type="PANTHER" id="PTHR46680:SF5">
    <property type="entry name" value="NFKB INHIBITOR EPSILON"/>
    <property type="match status" value="1"/>
</dbReference>
<dbReference type="Pfam" id="PF12796">
    <property type="entry name" value="Ank_2"/>
    <property type="match status" value="2"/>
</dbReference>
<dbReference type="PRINTS" id="PR01415">
    <property type="entry name" value="ANKYRIN"/>
</dbReference>
<dbReference type="SMART" id="SM00248">
    <property type="entry name" value="ANK"/>
    <property type="match status" value="6"/>
</dbReference>
<dbReference type="SUPFAM" id="SSF48403">
    <property type="entry name" value="Ankyrin repeat"/>
    <property type="match status" value="1"/>
</dbReference>
<dbReference type="PROSITE" id="PS50297">
    <property type="entry name" value="ANK_REP_REGION"/>
    <property type="match status" value="1"/>
</dbReference>
<dbReference type="PROSITE" id="PS50088">
    <property type="entry name" value="ANK_REPEAT"/>
    <property type="match status" value="4"/>
</dbReference>
<organism>
    <name type="scientific">Mus musculus</name>
    <name type="common">Mouse</name>
    <dbReference type="NCBI Taxonomy" id="10090"/>
    <lineage>
        <taxon>Eukaryota</taxon>
        <taxon>Metazoa</taxon>
        <taxon>Chordata</taxon>
        <taxon>Craniata</taxon>
        <taxon>Vertebrata</taxon>
        <taxon>Euteleostomi</taxon>
        <taxon>Mammalia</taxon>
        <taxon>Eutheria</taxon>
        <taxon>Euarchontoglires</taxon>
        <taxon>Glires</taxon>
        <taxon>Rodentia</taxon>
        <taxon>Myomorpha</taxon>
        <taxon>Muroidea</taxon>
        <taxon>Muridae</taxon>
        <taxon>Murinae</taxon>
        <taxon>Mus</taxon>
        <taxon>Mus</taxon>
    </lineage>
</organism>
<feature type="chain" id="PRO_0000067008" description="NF-kappa-B inhibitor epsilon">
    <location>
        <begin position="1"/>
        <end position="364"/>
    </location>
</feature>
<feature type="repeat" description="ANK 1">
    <location>
        <begin position="122"/>
        <end position="155"/>
    </location>
</feature>
<feature type="repeat" description="ANK 2">
    <location>
        <begin position="157"/>
        <end position="186"/>
    </location>
</feature>
<feature type="repeat" description="ANK 3">
    <location>
        <begin position="190"/>
        <end position="219"/>
    </location>
</feature>
<feature type="repeat" description="ANK 4">
    <location>
        <begin position="233"/>
        <end position="262"/>
    </location>
</feature>
<feature type="repeat" description="ANK 5">
    <location>
        <begin position="267"/>
        <end position="296"/>
    </location>
</feature>
<feature type="repeat" description="ANK 6">
    <location>
        <begin position="300"/>
        <end position="329"/>
    </location>
</feature>
<feature type="region of interest" description="Disordered" evidence="2">
    <location>
        <begin position="1"/>
        <end position="108"/>
    </location>
</feature>
<feature type="compositionally biased region" description="Low complexity" evidence="2">
    <location>
        <begin position="36"/>
        <end position="48"/>
    </location>
</feature>
<feature type="compositionally biased region" description="Basic and acidic residues" evidence="2">
    <location>
        <begin position="51"/>
        <end position="70"/>
    </location>
</feature>
<feature type="compositionally biased region" description="Pro residues" evidence="2">
    <location>
        <begin position="93"/>
        <end position="104"/>
    </location>
</feature>
<feature type="modified residue" description="Phosphoserine" evidence="1">
    <location>
        <position position="18"/>
    </location>
</feature>
<feature type="sequence conflict" description="In Ref. 1; AAB97517." evidence="4" ref="1">
    <original>A</original>
    <variation>V</variation>
    <location>
        <position position="97"/>
    </location>
</feature>
<feature type="sequence conflict" description="In Ref. 2; BAB25924." evidence="4" ref="2">
    <original>ASRILQDQHG</original>
    <variation>PAEFCRSAC</variation>
    <location>
        <begin position="182"/>
        <end position="191"/>
    </location>
</feature>
<feature type="sequence conflict" description="In Ref. 1; AAB97517." evidence="4" ref="1">
    <original>G</original>
    <variation>R</variation>
    <location>
        <position position="291"/>
    </location>
</feature>
<feature type="sequence conflict" description="In Ref. 2; BAB27943." evidence="4" ref="2">
    <original>LSYLPFDDLKISGKPLLCTD</original>
    <variation>GWVPTASHLEAGSAAAAVGTQAMSPLC</variation>
    <location>
        <begin position="345"/>
        <end position="364"/>
    </location>
</feature>
<sequence>MSDARKGPDEADDSQCDSGIESLRSLRSLPEPTAAPGSGSSQSGCPQPWRHAPETHKEPEKEDADGERADSTYASSSLTESFPLLERPEAKDPSPPAPGSPLPPAGVLSPQQLEALTYISEDGDTLLHLAVIHEAPSVLFCCLAFLPQEVLDIQNNLYQTALHLAVHLDQPDVVRALVLKGASRILQDQHGDTALHVACRRQNLACACCLLEEQPEPGRQLSHPLDLQLKNWQGLACLHIATLQRNQPLIELLLQNGADIDVQEGTSGKTALHLAVETQERSLVQFLLQAGARVDARMLNGCTPLHLAAGRGLNSISSTLCEAGADSLLLNVEDETPQDLAEDLLSYLPFDDLKISGKPLLCTD</sequence>
<reference key="1">
    <citation type="journal article" date="1997" name="Proc. Natl. Acad. Sci. U.S.A.">
        <title>Cloning and functional characterization of mouse IkappaBepsilon.</title>
        <authorList>
            <person name="Simeonidis S."/>
            <person name="Liang S."/>
            <person name="Chen G."/>
            <person name="Thanos D."/>
        </authorList>
    </citation>
    <scope>NUCLEOTIDE SEQUENCE [MRNA]</scope>
    <source>
        <tissue>Brain</tissue>
    </source>
</reference>
<reference key="2">
    <citation type="journal article" date="2005" name="Science">
        <title>The transcriptional landscape of the mammalian genome.</title>
        <authorList>
            <person name="Carninci P."/>
            <person name="Kasukawa T."/>
            <person name="Katayama S."/>
            <person name="Gough J."/>
            <person name="Frith M.C."/>
            <person name="Maeda N."/>
            <person name="Oyama R."/>
            <person name="Ravasi T."/>
            <person name="Lenhard B."/>
            <person name="Wells C."/>
            <person name="Kodzius R."/>
            <person name="Shimokawa K."/>
            <person name="Bajic V.B."/>
            <person name="Brenner S.E."/>
            <person name="Batalov S."/>
            <person name="Forrest A.R."/>
            <person name="Zavolan M."/>
            <person name="Davis M.J."/>
            <person name="Wilming L.G."/>
            <person name="Aidinis V."/>
            <person name="Allen J.E."/>
            <person name="Ambesi-Impiombato A."/>
            <person name="Apweiler R."/>
            <person name="Aturaliya R.N."/>
            <person name="Bailey T.L."/>
            <person name="Bansal M."/>
            <person name="Baxter L."/>
            <person name="Beisel K.W."/>
            <person name="Bersano T."/>
            <person name="Bono H."/>
            <person name="Chalk A.M."/>
            <person name="Chiu K.P."/>
            <person name="Choudhary V."/>
            <person name="Christoffels A."/>
            <person name="Clutterbuck D.R."/>
            <person name="Crowe M.L."/>
            <person name="Dalla E."/>
            <person name="Dalrymple B.P."/>
            <person name="de Bono B."/>
            <person name="Della Gatta G."/>
            <person name="di Bernardo D."/>
            <person name="Down T."/>
            <person name="Engstrom P."/>
            <person name="Fagiolini M."/>
            <person name="Faulkner G."/>
            <person name="Fletcher C.F."/>
            <person name="Fukushima T."/>
            <person name="Furuno M."/>
            <person name="Futaki S."/>
            <person name="Gariboldi M."/>
            <person name="Georgii-Hemming P."/>
            <person name="Gingeras T.R."/>
            <person name="Gojobori T."/>
            <person name="Green R.E."/>
            <person name="Gustincich S."/>
            <person name="Harbers M."/>
            <person name="Hayashi Y."/>
            <person name="Hensch T.K."/>
            <person name="Hirokawa N."/>
            <person name="Hill D."/>
            <person name="Huminiecki L."/>
            <person name="Iacono M."/>
            <person name="Ikeo K."/>
            <person name="Iwama A."/>
            <person name="Ishikawa T."/>
            <person name="Jakt M."/>
            <person name="Kanapin A."/>
            <person name="Katoh M."/>
            <person name="Kawasawa Y."/>
            <person name="Kelso J."/>
            <person name="Kitamura H."/>
            <person name="Kitano H."/>
            <person name="Kollias G."/>
            <person name="Krishnan S.P."/>
            <person name="Kruger A."/>
            <person name="Kummerfeld S.K."/>
            <person name="Kurochkin I.V."/>
            <person name="Lareau L.F."/>
            <person name="Lazarevic D."/>
            <person name="Lipovich L."/>
            <person name="Liu J."/>
            <person name="Liuni S."/>
            <person name="McWilliam S."/>
            <person name="Madan Babu M."/>
            <person name="Madera M."/>
            <person name="Marchionni L."/>
            <person name="Matsuda H."/>
            <person name="Matsuzawa S."/>
            <person name="Miki H."/>
            <person name="Mignone F."/>
            <person name="Miyake S."/>
            <person name="Morris K."/>
            <person name="Mottagui-Tabar S."/>
            <person name="Mulder N."/>
            <person name="Nakano N."/>
            <person name="Nakauchi H."/>
            <person name="Ng P."/>
            <person name="Nilsson R."/>
            <person name="Nishiguchi S."/>
            <person name="Nishikawa S."/>
            <person name="Nori F."/>
            <person name="Ohara O."/>
            <person name="Okazaki Y."/>
            <person name="Orlando V."/>
            <person name="Pang K.C."/>
            <person name="Pavan W.J."/>
            <person name="Pavesi G."/>
            <person name="Pesole G."/>
            <person name="Petrovsky N."/>
            <person name="Piazza S."/>
            <person name="Reed J."/>
            <person name="Reid J.F."/>
            <person name="Ring B.Z."/>
            <person name="Ringwald M."/>
            <person name="Rost B."/>
            <person name="Ruan Y."/>
            <person name="Salzberg S.L."/>
            <person name="Sandelin A."/>
            <person name="Schneider C."/>
            <person name="Schoenbach C."/>
            <person name="Sekiguchi K."/>
            <person name="Semple C.A."/>
            <person name="Seno S."/>
            <person name="Sessa L."/>
            <person name="Sheng Y."/>
            <person name="Shibata Y."/>
            <person name="Shimada H."/>
            <person name="Shimada K."/>
            <person name="Silva D."/>
            <person name="Sinclair B."/>
            <person name="Sperling S."/>
            <person name="Stupka E."/>
            <person name="Sugiura K."/>
            <person name="Sultana R."/>
            <person name="Takenaka Y."/>
            <person name="Taki K."/>
            <person name="Tammoja K."/>
            <person name="Tan S.L."/>
            <person name="Tang S."/>
            <person name="Taylor M.S."/>
            <person name="Tegner J."/>
            <person name="Teichmann S.A."/>
            <person name="Ueda H.R."/>
            <person name="van Nimwegen E."/>
            <person name="Verardo R."/>
            <person name="Wei C.L."/>
            <person name="Yagi K."/>
            <person name="Yamanishi H."/>
            <person name="Zabarovsky E."/>
            <person name="Zhu S."/>
            <person name="Zimmer A."/>
            <person name="Hide W."/>
            <person name="Bult C."/>
            <person name="Grimmond S.M."/>
            <person name="Teasdale R.D."/>
            <person name="Liu E.T."/>
            <person name="Brusic V."/>
            <person name="Quackenbush J."/>
            <person name="Wahlestedt C."/>
            <person name="Mattick J.S."/>
            <person name="Hume D.A."/>
            <person name="Kai C."/>
            <person name="Sasaki D."/>
            <person name="Tomaru Y."/>
            <person name="Fukuda S."/>
            <person name="Kanamori-Katayama M."/>
            <person name="Suzuki M."/>
            <person name="Aoki J."/>
            <person name="Arakawa T."/>
            <person name="Iida J."/>
            <person name="Imamura K."/>
            <person name="Itoh M."/>
            <person name="Kato T."/>
            <person name="Kawaji H."/>
            <person name="Kawagashira N."/>
            <person name="Kawashima T."/>
            <person name="Kojima M."/>
            <person name="Kondo S."/>
            <person name="Konno H."/>
            <person name="Nakano K."/>
            <person name="Ninomiya N."/>
            <person name="Nishio T."/>
            <person name="Okada M."/>
            <person name="Plessy C."/>
            <person name="Shibata K."/>
            <person name="Shiraki T."/>
            <person name="Suzuki S."/>
            <person name="Tagami M."/>
            <person name="Waki K."/>
            <person name="Watahiki A."/>
            <person name="Okamura-Oho Y."/>
            <person name="Suzuki H."/>
            <person name="Kawai J."/>
            <person name="Hayashizaki Y."/>
        </authorList>
    </citation>
    <scope>NUCLEOTIDE SEQUENCE [LARGE SCALE MRNA]</scope>
    <source>
        <strain>C57BL/6J</strain>
        <tissue>Bone marrow</tissue>
        <tissue>Embryo</tissue>
        <tissue>Stomach</tissue>
    </source>
</reference>
<reference key="3">
    <citation type="journal article" date="2004" name="Genome Res.">
        <title>The status, quality, and expansion of the NIH full-length cDNA project: the Mammalian Gene Collection (MGC).</title>
        <authorList>
            <consortium name="The MGC Project Team"/>
        </authorList>
    </citation>
    <scope>NUCLEOTIDE SEQUENCE [LARGE SCALE MRNA]</scope>
    <source>
        <strain>FVB/N</strain>
        <tissue>Salivary gland</tissue>
    </source>
</reference>
<reference key="4">
    <citation type="journal article" date="2010" name="Cell">
        <title>A tissue-specific atlas of mouse protein phosphorylation and expression.</title>
        <authorList>
            <person name="Huttlin E.L."/>
            <person name="Jedrychowski M.P."/>
            <person name="Elias J.E."/>
            <person name="Goswami T."/>
            <person name="Rad R."/>
            <person name="Beausoleil S.A."/>
            <person name="Villen J."/>
            <person name="Haas W."/>
            <person name="Sowa M.E."/>
            <person name="Gygi S.P."/>
        </authorList>
    </citation>
    <scope>IDENTIFICATION BY MASS SPECTROMETRY [LARGE SCALE ANALYSIS]</scope>
    <source>
        <tissue>Spleen</tissue>
    </source>
</reference>
<reference key="5">
    <citation type="journal article" date="2020" name="Blood Cancer J.">
        <title>Nfkbie-deficiency leads to increased susceptibility to develop B-cell lymphoproliferative disorders in aged mice.</title>
        <authorList>
            <person name="Della-Valle V."/>
            <person name="Roos-Weil D."/>
            <person name="Scourzic L."/>
            <person name="Mouly E."/>
            <person name="Aid Z."/>
            <person name="Darwiche W."/>
            <person name="Lecluse Y."/>
            <person name="Damm F."/>
            <person name="Memet S."/>
            <person name="Mercher T."/>
            <person name="Aoufouchi S."/>
            <person name="Nguyen-Khac F."/>
            <person name="Bernard O.A."/>
            <person name="Ghamlouch H."/>
        </authorList>
    </citation>
    <scope>FUNCTION</scope>
    <scope>DISRUPTION PHENOTYPE</scope>
</reference>
<proteinExistence type="evidence at protein level"/>